<comment type="function">
    <text evidence="1">Probable toxic component of a type II toxin-antitoxin (TA) system. It is not known which gene encodes its antitoxin.</text>
</comment>
<comment type="similarity">
    <text evidence="2">Belongs to the MbcT/ParT/Res family.</text>
</comment>
<keyword id="KW-0520">NAD</keyword>
<keyword id="KW-0548">Nucleotidyltransferase</keyword>
<keyword id="KW-0614">Plasmid</keyword>
<keyword id="KW-1185">Reference proteome</keyword>
<keyword id="KW-1277">Toxin-antitoxin system</keyword>
<keyword id="KW-0808">Transferase</keyword>
<proteinExistence type="inferred from homology"/>
<geneLocation type="plasmid">
    <name>sym pNGR234a</name>
</geneLocation>
<evidence type="ECO:0000250" key="1">
    <source>
        <dbReference type="UniProtKB" id="P9WLP9"/>
    </source>
</evidence>
<evidence type="ECO:0000305" key="2"/>
<reference key="1">
    <citation type="journal article" date="1997" name="Nature">
        <title>Molecular basis of symbiosis between Rhizobium and legumes.</title>
        <authorList>
            <person name="Freiberg C.A."/>
            <person name="Fellay R."/>
            <person name="Bairoch A."/>
            <person name="Broughton W.J."/>
            <person name="Rosenthal A."/>
            <person name="Perret X."/>
        </authorList>
    </citation>
    <scope>NUCLEOTIDE SEQUENCE [LARGE SCALE GENOMIC DNA]</scope>
    <source>
        <strain>NBRC 101917 / NGR234</strain>
    </source>
</reference>
<reference key="2">
    <citation type="journal article" date="2009" name="Appl. Environ. Microbiol.">
        <title>Rhizobium sp. strain NGR234 possesses a remarkable number of secretion systems.</title>
        <authorList>
            <person name="Schmeisser C."/>
            <person name="Liesegang H."/>
            <person name="Krysciak D."/>
            <person name="Bakkou N."/>
            <person name="Le Quere A."/>
            <person name="Wollherr A."/>
            <person name="Heinemeyer I."/>
            <person name="Morgenstern B."/>
            <person name="Pommerening-Roeser A."/>
            <person name="Flores M."/>
            <person name="Palacios R."/>
            <person name="Brenner S."/>
            <person name="Gottschalk G."/>
            <person name="Schmitz R.A."/>
            <person name="Broughton W.J."/>
            <person name="Perret X."/>
            <person name="Strittmatter A.W."/>
            <person name="Streit W.R."/>
        </authorList>
    </citation>
    <scope>NUCLEOTIDE SEQUENCE [LARGE SCALE GENOMIC DNA]</scope>
    <source>
        <strain>NBRC 101917 / NGR234</strain>
    </source>
</reference>
<name>Y4KH_SINFN</name>
<gene>
    <name type="ordered locus">NGR_a02880</name>
    <name type="ORF">y4kH</name>
</gene>
<organism>
    <name type="scientific">Sinorhizobium fredii (strain NBRC 101917 / NGR234)</name>
    <dbReference type="NCBI Taxonomy" id="394"/>
    <lineage>
        <taxon>Bacteria</taxon>
        <taxon>Pseudomonadati</taxon>
        <taxon>Pseudomonadota</taxon>
        <taxon>Alphaproteobacteria</taxon>
        <taxon>Hyphomicrobiales</taxon>
        <taxon>Rhizobiaceae</taxon>
        <taxon>Sinorhizobium/Ensifer group</taxon>
        <taxon>Sinorhizobium</taxon>
    </lineage>
</organism>
<dbReference type="EC" id="2.4.2.-" evidence="2"/>
<dbReference type="EMBL" id="U00090">
    <property type="protein sequence ID" value="AAB91739.1"/>
    <property type="molecule type" value="Genomic_DNA"/>
</dbReference>
<dbReference type="RefSeq" id="NP_443937.1">
    <property type="nucleotide sequence ID" value="NC_000914.2"/>
</dbReference>
<dbReference type="KEGG" id="rhi:NGR_a02880"/>
<dbReference type="PATRIC" id="fig|394.7.peg.306"/>
<dbReference type="eggNOG" id="ENOG5033CXR">
    <property type="taxonomic scope" value="Bacteria"/>
</dbReference>
<dbReference type="HOGENOM" id="CLU_115405_0_0_5"/>
<dbReference type="OrthoDB" id="425502at2"/>
<dbReference type="Proteomes" id="UP000001054">
    <property type="component" value="Plasmid pNGR234a"/>
</dbReference>
<dbReference type="GO" id="GO:0016779">
    <property type="term" value="F:nucleotidyltransferase activity"/>
    <property type="evidence" value="ECO:0007669"/>
    <property type="project" value="UniProtKB-KW"/>
</dbReference>
<dbReference type="InterPro" id="IPR014914">
    <property type="entry name" value="RES_dom"/>
</dbReference>
<dbReference type="Pfam" id="PF08808">
    <property type="entry name" value="RES"/>
    <property type="match status" value="1"/>
</dbReference>
<feature type="chain" id="PRO_0000200890" description="Probable toxin y4kH">
    <location>
        <begin position="1"/>
        <end position="127"/>
    </location>
</feature>
<protein>
    <recommendedName>
        <fullName evidence="2">Probable toxin y4kH</fullName>
        <ecNumber evidence="2">2.4.2.-</ecNumber>
    </recommendedName>
</protein>
<accession>P55528</accession>
<sequence>MRERAVGSKGSFPIGIAELQEVSCASVEINQPLLLADLRSDGMLRMRIPTDAARAASHELGKQWSRALWLHDEKPDGIIYDSRLNGEANTALFDRALPKLNVKSSGPLLDFRDEVAQILDDFSLEIV</sequence>